<proteinExistence type="inferred from homology"/>
<evidence type="ECO:0000250" key="1"/>
<evidence type="ECO:0000305" key="2"/>
<accession>Q89A16</accession>
<comment type="function">
    <text evidence="1">Chaperone involved in the maturation of iron-sulfur cluster-containing proteins. Has a low intrinsic ATPase activity which is markedly stimulated by HscB. Involved in the maturation of IscU (By similarity).</text>
</comment>
<comment type="similarity">
    <text evidence="2">Belongs to the heat shock protein 70 family.</text>
</comment>
<sequence length="511" mass="57609">MITLKTIKKKYNIEQKNTKLSIGIDFGTTYSLVASALEDNIYIILDQNNRALLPSIINYTSKKPIVGWEAQKQAINDPKNTIISIKRLIGHSYDEINKLYPNLPYHLTYDKNGILSFIVQDNLINTINVSSEIFKTLKNRVNTIFNQKILGAVITVPAHFNDLQRQEIKKSAELANLNIIRLLNEPTSAAIAYGLHLNKNKIVAIYDLGGGTFDISILKLNQGIFEVLATSGNTNLGGDDFDQLLVNYIQKKTHFSYSKLDFIFQRKLLYLAKSIKIKLTSHNSVQFQFNNSKMHTITRFEFEKMIEPLILKTLNICQHVLHDSNTNLTHIEEIILVGGSTNIPIVQRKVSDFFKQLPLCTINPEQVVVAGAAIQANMLTNGSKYNNFILLDVVPLSLGIEVIGNIVEKIILKNTPLPISKTKTFTTFKDKQTTMLIHVLQGEHKLVNKCQSLCRFVLKEIPKKPAGKIIVLVNFQIDVNGLLSVTAEIKSTKIRKNITVNASIPIKKYRN</sequence>
<protein>
    <recommendedName>
        <fullName>Chaperone protein HscA</fullName>
    </recommendedName>
</protein>
<keyword id="KW-0067">ATP-binding</keyword>
<keyword id="KW-0143">Chaperone</keyword>
<keyword id="KW-0547">Nucleotide-binding</keyword>
<keyword id="KW-1185">Reference proteome</keyword>
<gene>
    <name type="primary">hscA</name>
    <name type="ordered locus">bbp_547</name>
</gene>
<feature type="chain" id="PRO_0000078621" description="Chaperone protein HscA">
    <location>
        <begin position="1"/>
        <end position="511"/>
    </location>
</feature>
<dbReference type="EMBL" id="AE016826">
    <property type="protein sequence ID" value="AAO27245.1"/>
    <property type="molecule type" value="Genomic_DNA"/>
</dbReference>
<dbReference type="RefSeq" id="WP_011091646.1">
    <property type="nucleotide sequence ID" value="NC_004545.1"/>
</dbReference>
<dbReference type="SMR" id="Q89A16"/>
<dbReference type="STRING" id="224915.bbp_547"/>
<dbReference type="KEGG" id="bab:bbp_547"/>
<dbReference type="eggNOG" id="COG0443">
    <property type="taxonomic scope" value="Bacteria"/>
</dbReference>
<dbReference type="HOGENOM" id="CLU_005965_0_0_6"/>
<dbReference type="OrthoDB" id="9766019at2"/>
<dbReference type="Proteomes" id="UP000000601">
    <property type="component" value="Chromosome"/>
</dbReference>
<dbReference type="GO" id="GO:0005524">
    <property type="term" value="F:ATP binding"/>
    <property type="evidence" value="ECO:0007669"/>
    <property type="project" value="UniProtKB-KW"/>
</dbReference>
<dbReference type="GO" id="GO:0140662">
    <property type="term" value="F:ATP-dependent protein folding chaperone"/>
    <property type="evidence" value="ECO:0007669"/>
    <property type="project" value="InterPro"/>
</dbReference>
<dbReference type="Gene3D" id="3.30.30.30">
    <property type="match status" value="1"/>
</dbReference>
<dbReference type="Gene3D" id="3.30.420.40">
    <property type="match status" value="2"/>
</dbReference>
<dbReference type="Gene3D" id="3.90.640.10">
    <property type="entry name" value="Actin, Chain A, domain 4"/>
    <property type="match status" value="1"/>
</dbReference>
<dbReference type="Gene3D" id="2.60.34.10">
    <property type="entry name" value="Substrate Binding Domain Of DNAk, Chain A, domain 1"/>
    <property type="match status" value="1"/>
</dbReference>
<dbReference type="InterPro" id="IPR043129">
    <property type="entry name" value="ATPase_NBD"/>
</dbReference>
<dbReference type="InterPro" id="IPR018181">
    <property type="entry name" value="Heat_shock_70_CS"/>
</dbReference>
<dbReference type="InterPro" id="IPR029047">
    <property type="entry name" value="HSP70_peptide-bd_sf"/>
</dbReference>
<dbReference type="InterPro" id="IPR013126">
    <property type="entry name" value="Hsp_70_fam"/>
</dbReference>
<dbReference type="NCBIfam" id="NF003520">
    <property type="entry name" value="PRK05183.1"/>
    <property type="match status" value="1"/>
</dbReference>
<dbReference type="PANTHER" id="PTHR19375">
    <property type="entry name" value="HEAT SHOCK PROTEIN 70KDA"/>
    <property type="match status" value="1"/>
</dbReference>
<dbReference type="Pfam" id="PF00012">
    <property type="entry name" value="HSP70"/>
    <property type="match status" value="1"/>
</dbReference>
<dbReference type="PRINTS" id="PR00301">
    <property type="entry name" value="HEATSHOCK70"/>
</dbReference>
<dbReference type="SUPFAM" id="SSF53067">
    <property type="entry name" value="Actin-like ATPase domain"/>
    <property type="match status" value="2"/>
</dbReference>
<dbReference type="SUPFAM" id="SSF100920">
    <property type="entry name" value="Heat shock protein 70kD (HSP70), peptide-binding domain"/>
    <property type="match status" value="1"/>
</dbReference>
<dbReference type="PROSITE" id="PS00329">
    <property type="entry name" value="HSP70_2"/>
    <property type="match status" value="1"/>
</dbReference>
<dbReference type="PROSITE" id="PS01036">
    <property type="entry name" value="HSP70_3"/>
    <property type="match status" value="1"/>
</dbReference>
<name>HSCA_BUCBP</name>
<reference key="1">
    <citation type="journal article" date="2003" name="Proc. Natl. Acad. Sci. U.S.A.">
        <title>Reductive genome evolution in Buchnera aphidicola.</title>
        <authorList>
            <person name="van Ham R.C.H.J."/>
            <person name="Kamerbeek J."/>
            <person name="Palacios C."/>
            <person name="Rausell C."/>
            <person name="Abascal F."/>
            <person name="Bastolla U."/>
            <person name="Fernandez J.M."/>
            <person name="Jimenez L."/>
            <person name="Postigo M."/>
            <person name="Silva F.J."/>
            <person name="Tamames J."/>
            <person name="Viguera E."/>
            <person name="Latorre A."/>
            <person name="Valencia A."/>
            <person name="Moran F."/>
            <person name="Moya A."/>
        </authorList>
    </citation>
    <scope>NUCLEOTIDE SEQUENCE [LARGE SCALE GENOMIC DNA]</scope>
    <source>
        <strain>Bp</strain>
    </source>
</reference>
<organism>
    <name type="scientific">Buchnera aphidicola subsp. Baizongia pistaciae (strain Bp)</name>
    <dbReference type="NCBI Taxonomy" id="224915"/>
    <lineage>
        <taxon>Bacteria</taxon>
        <taxon>Pseudomonadati</taxon>
        <taxon>Pseudomonadota</taxon>
        <taxon>Gammaproteobacteria</taxon>
        <taxon>Enterobacterales</taxon>
        <taxon>Erwiniaceae</taxon>
        <taxon>Buchnera</taxon>
    </lineage>
</organism>